<protein>
    <recommendedName>
        <fullName evidence="5">Very-long-chain 3-oxoacyl-CoA reductase</fullName>
        <ecNumber evidence="2">1.1.1.330</ecNumber>
    </recommendedName>
    <alternativeName>
        <fullName evidence="2">17-beta-hydroxysteroid dehydrogenase 12</fullName>
        <shortName evidence="2">17-beta-HSD 12</shortName>
    </alternativeName>
    <alternativeName>
        <fullName evidence="2">3-ketoacyl-CoA reductase</fullName>
        <shortName evidence="2">KAR</shortName>
    </alternativeName>
    <alternativeName>
        <fullName evidence="2">Estradiol 17-beta-dehydrogenase 12</fullName>
        <ecNumber evidence="2">1.1.1.62</ecNumber>
    </alternativeName>
</protein>
<dbReference type="EC" id="1.1.1.330" evidence="2"/>
<dbReference type="EC" id="1.1.1.62" evidence="2"/>
<dbReference type="EMBL" id="AB169576">
    <property type="protein sequence ID" value="BAE01658.1"/>
    <property type="molecule type" value="mRNA"/>
</dbReference>
<dbReference type="SMR" id="Q4R5G7"/>
<dbReference type="STRING" id="9541.ENSMFAP00000015555"/>
<dbReference type="VEuPathDB" id="HostDB:ENSMFAG00000030974"/>
<dbReference type="eggNOG" id="KOG1014">
    <property type="taxonomic scope" value="Eukaryota"/>
</dbReference>
<dbReference type="OMA" id="LVAPGMM"/>
<dbReference type="UniPathway" id="UPA00094"/>
<dbReference type="UniPathway" id="UPA00769"/>
<dbReference type="Proteomes" id="UP000233100">
    <property type="component" value="Chromosome 14"/>
</dbReference>
<dbReference type="GO" id="GO:0005789">
    <property type="term" value="C:endoplasmic reticulum membrane"/>
    <property type="evidence" value="ECO:0007669"/>
    <property type="project" value="UniProtKB-SubCell"/>
</dbReference>
<dbReference type="GO" id="GO:0004303">
    <property type="term" value="F:estradiol 17-beta-dehydrogenase [NAD(P)+] activity"/>
    <property type="evidence" value="ECO:0007669"/>
    <property type="project" value="UniProtKB-EC"/>
</dbReference>
<dbReference type="GO" id="GO:0141040">
    <property type="term" value="F:very-long-chain 3-oxoacyl-CoA reductase activity"/>
    <property type="evidence" value="ECO:0007669"/>
    <property type="project" value="UniProtKB-EC"/>
</dbReference>
<dbReference type="GO" id="GO:0006703">
    <property type="term" value="P:estrogen biosynthetic process"/>
    <property type="evidence" value="ECO:0007669"/>
    <property type="project" value="UniProtKB-UniPathway"/>
</dbReference>
<dbReference type="GO" id="GO:0006633">
    <property type="term" value="P:fatty acid biosynthetic process"/>
    <property type="evidence" value="ECO:0007669"/>
    <property type="project" value="UniProtKB-UniPathway"/>
</dbReference>
<dbReference type="CDD" id="cd05356">
    <property type="entry name" value="17beta-HSD1_like_SDR_c"/>
    <property type="match status" value="1"/>
</dbReference>
<dbReference type="FunFam" id="3.40.50.720:FF:000137">
    <property type="entry name" value="Hydroxysteroid (17-beta) dehydrogenase 3"/>
    <property type="match status" value="1"/>
</dbReference>
<dbReference type="Gene3D" id="3.40.50.720">
    <property type="entry name" value="NAD(P)-binding Rossmann-like Domain"/>
    <property type="match status" value="1"/>
</dbReference>
<dbReference type="InterPro" id="IPR036291">
    <property type="entry name" value="NAD(P)-bd_dom_sf"/>
</dbReference>
<dbReference type="InterPro" id="IPR020904">
    <property type="entry name" value="Sc_DH/Rdtase_CS"/>
</dbReference>
<dbReference type="InterPro" id="IPR002347">
    <property type="entry name" value="SDR_fam"/>
</dbReference>
<dbReference type="InterPro" id="IPR051019">
    <property type="entry name" value="VLCFA-Steroid_DH"/>
</dbReference>
<dbReference type="PANTHER" id="PTHR43899">
    <property type="entry name" value="RH59310P"/>
    <property type="match status" value="1"/>
</dbReference>
<dbReference type="PANTHER" id="PTHR43899:SF14">
    <property type="entry name" value="VERY-LONG-CHAIN 3-OXOACYL-COA REDUCTASE"/>
    <property type="match status" value="1"/>
</dbReference>
<dbReference type="Pfam" id="PF00106">
    <property type="entry name" value="adh_short"/>
    <property type="match status" value="1"/>
</dbReference>
<dbReference type="PIRSF" id="PIRSF000126">
    <property type="entry name" value="11-beta-HSD1"/>
    <property type="match status" value="1"/>
</dbReference>
<dbReference type="PRINTS" id="PR00081">
    <property type="entry name" value="GDHRDH"/>
</dbReference>
<dbReference type="PRINTS" id="PR00080">
    <property type="entry name" value="SDRFAMILY"/>
</dbReference>
<dbReference type="SUPFAM" id="SSF51735">
    <property type="entry name" value="NAD(P)-binding Rossmann-fold domains"/>
    <property type="match status" value="1"/>
</dbReference>
<dbReference type="PROSITE" id="PS00061">
    <property type="entry name" value="ADH_SHORT"/>
    <property type="match status" value="1"/>
</dbReference>
<gene>
    <name type="primary">HSD17B12</name>
    <name type="ORF">QnpA-11752</name>
</gene>
<organism>
    <name type="scientific">Macaca fascicularis</name>
    <name type="common">Crab-eating macaque</name>
    <name type="synonym">Cynomolgus monkey</name>
    <dbReference type="NCBI Taxonomy" id="9541"/>
    <lineage>
        <taxon>Eukaryota</taxon>
        <taxon>Metazoa</taxon>
        <taxon>Chordata</taxon>
        <taxon>Craniata</taxon>
        <taxon>Vertebrata</taxon>
        <taxon>Euteleostomi</taxon>
        <taxon>Mammalia</taxon>
        <taxon>Eutheria</taxon>
        <taxon>Euarchontoglires</taxon>
        <taxon>Primates</taxon>
        <taxon>Haplorrhini</taxon>
        <taxon>Catarrhini</taxon>
        <taxon>Cercopithecidae</taxon>
        <taxon>Cercopithecinae</taxon>
        <taxon>Macaca</taxon>
    </lineage>
</organism>
<reference key="1">
    <citation type="submission" date="2005-06" db="EMBL/GenBank/DDBJ databases">
        <title>DNA sequences of macaque genes expressed in brain or testis and its evolutionary implications.</title>
        <authorList>
            <consortium name="International consortium for macaque cDNA sequencing and analysis"/>
        </authorList>
    </citation>
    <scope>NUCLEOTIDE SEQUENCE [LARGE SCALE MRNA]</scope>
    <source>
        <tissue>Parietal cortex</tissue>
    </source>
</reference>
<name>DHB12_MACFA</name>
<feature type="chain" id="PRO_0000248369" description="Very-long-chain 3-oxoacyl-CoA reductase">
    <location>
        <begin position="1"/>
        <end position="312"/>
    </location>
</feature>
<feature type="transmembrane region" description="Helical" evidence="3">
    <location>
        <begin position="4"/>
        <end position="24"/>
    </location>
</feature>
<feature type="transmembrane region" description="Helical" evidence="3">
    <location>
        <begin position="182"/>
        <end position="202"/>
    </location>
</feature>
<feature type="transmembrane region" description="Helical" evidence="3">
    <location>
        <begin position="271"/>
        <end position="291"/>
    </location>
</feature>
<feature type="short sequence motif" description="Di-lysine motif" evidence="1">
    <location>
        <begin position="308"/>
        <end position="312"/>
    </location>
</feature>
<feature type="active site" description="Proton acceptor" evidence="4">
    <location>
        <position position="202"/>
    </location>
</feature>
<feature type="binding site" evidence="1">
    <location>
        <begin position="50"/>
        <end position="79"/>
    </location>
    <ligand>
        <name>NADP(+)</name>
        <dbReference type="ChEBI" id="CHEBI:58349"/>
    </ligand>
</feature>
<feature type="binding site" evidence="1">
    <location>
        <position position="189"/>
    </location>
    <ligand>
        <name>substrate</name>
    </ligand>
</feature>
<accession>Q4R5G7</accession>
<comment type="function">
    <text evidence="2">Catalyzes the second of the four reactions of the long-chain fatty acids elongation cycle. This endoplasmic reticulum-bound enzymatic process, allows the addition of two carbons to the chain of long- and very long-chain fatty acids/VLCFAs per cycle. This enzyme has a 3-ketoacyl-CoA reductase activity, reducing 3-ketoacyl-CoA to 3-hydroxyacyl-CoA, within each cycle of fatty acid elongation. Thereby, it may participate in the production of VLCFAs of different chain lengths that are involved in multiple biological processes as precursors of membrane lipids and lipid mediators. May also catalyze the transformation of estrone (E1) into estradiol (E2) and play a role in estrogen formation.</text>
</comment>
<comment type="catalytic activity">
    <reaction evidence="2">
        <text>a very-long-chain (3R)-3-hydroxyacyl-CoA + NADP(+) = a very-long-chain 3-oxoacyl-CoA + NADPH + H(+)</text>
        <dbReference type="Rhea" id="RHEA:48680"/>
        <dbReference type="ChEBI" id="CHEBI:15378"/>
        <dbReference type="ChEBI" id="CHEBI:57783"/>
        <dbReference type="ChEBI" id="CHEBI:58349"/>
        <dbReference type="ChEBI" id="CHEBI:85440"/>
        <dbReference type="ChEBI" id="CHEBI:90725"/>
        <dbReference type="EC" id="1.1.1.330"/>
    </reaction>
</comment>
<comment type="catalytic activity">
    <reaction evidence="2">
        <text>17beta-estradiol + NAD(+) = estrone + NADH + H(+)</text>
        <dbReference type="Rhea" id="RHEA:24612"/>
        <dbReference type="ChEBI" id="CHEBI:15378"/>
        <dbReference type="ChEBI" id="CHEBI:16469"/>
        <dbReference type="ChEBI" id="CHEBI:17263"/>
        <dbReference type="ChEBI" id="CHEBI:57540"/>
        <dbReference type="ChEBI" id="CHEBI:57945"/>
        <dbReference type="EC" id="1.1.1.62"/>
    </reaction>
</comment>
<comment type="catalytic activity">
    <reaction evidence="2">
        <text>17beta-estradiol + NADP(+) = estrone + NADPH + H(+)</text>
        <dbReference type="Rhea" id="RHEA:24616"/>
        <dbReference type="ChEBI" id="CHEBI:15378"/>
        <dbReference type="ChEBI" id="CHEBI:16469"/>
        <dbReference type="ChEBI" id="CHEBI:17263"/>
        <dbReference type="ChEBI" id="CHEBI:57783"/>
        <dbReference type="ChEBI" id="CHEBI:58349"/>
        <dbReference type="EC" id="1.1.1.62"/>
    </reaction>
</comment>
<comment type="catalytic activity">
    <reaction evidence="2">
        <text>3-oxooctadecanoyl-CoA + NADPH + H(+) = (3R)-hydroxyoctadecanoyl-CoA + NADP(+)</text>
        <dbReference type="Rhea" id="RHEA:39151"/>
        <dbReference type="ChEBI" id="CHEBI:15378"/>
        <dbReference type="ChEBI" id="CHEBI:57783"/>
        <dbReference type="ChEBI" id="CHEBI:58349"/>
        <dbReference type="ChEBI" id="CHEBI:71407"/>
        <dbReference type="ChEBI" id="CHEBI:76374"/>
    </reaction>
</comment>
<comment type="catalytic activity">
    <reaction evidence="2">
        <text>(7Z,10Z,13Z,16Z)-3-oxodocosatetraenoyl-CoA + NADPH + H(+) = (3R)-hydroxy-(7Z,10Z,13Z,16Z)-docosatetraenoyl-CoA + NADP(+)</text>
        <dbReference type="Rhea" id="RHEA:39323"/>
        <dbReference type="ChEBI" id="CHEBI:15378"/>
        <dbReference type="ChEBI" id="CHEBI:57783"/>
        <dbReference type="ChEBI" id="CHEBI:58349"/>
        <dbReference type="ChEBI" id="CHEBI:73852"/>
        <dbReference type="ChEBI" id="CHEBI:76415"/>
    </reaction>
</comment>
<comment type="catalytic activity">
    <reaction evidence="2">
        <text>3-oxo-(7Z,10Z,13Z,16Z,19Z)-docosapentaenoyl-CoA + NADPH + H(+) = (3R)-hydroxy-(7Z,10Z,13Z,16Z,19Z)-docosapentaenoyl-CoA + NADP(+)</text>
        <dbReference type="Rhea" id="RHEA:39459"/>
        <dbReference type="ChEBI" id="CHEBI:15378"/>
        <dbReference type="ChEBI" id="CHEBI:57783"/>
        <dbReference type="ChEBI" id="CHEBI:58349"/>
        <dbReference type="ChEBI" id="CHEBI:73863"/>
        <dbReference type="ChEBI" id="CHEBI:76460"/>
    </reaction>
</comment>
<comment type="catalytic activity">
    <reaction evidence="2">
        <text>(8Z,11Z,14Z)-3-oxoeicosatrienoyl-CoA + NADPH + H(+) = (3R)-hydroxy-(8Z,11Z,14Z)-eicosatrienoyl-CoA + NADP(+)</text>
        <dbReference type="Rhea" id="RHEA:39311"/>
        <dbReference type="ChEBI" id="CHEBI:15378"/>
        <dbReference type="ChEBI" id="CHEBI:57783"/>
        <dbReference type="ChEBI" id="CHEBI:58349"/>
        <dbReference type="ChEBI" id="CHEBI:71481"/>
        <dbReference type="ChEBI" id="CHEBI:76411"/>
    </reaction>
</comment>
<comment type="pathway">
    <text evidence="2">Lipid metabolism; fatty acid biosynthesis.</text>
</comment>
<comment type="pathway">
    <text evidence="2">Steroid biosynthesis; estrogen biosynthesis.</text>
</comment>
<comment type="subcellular location">
    <subcellularLocation>
        <location evidence="2">Endoplasmic reticulum membrane</location>
        <topology evidence="2">Multi-pass membrane protein</topology>
    </subcellularLocation>
</comment>
<comment type="domain">
    <text evidence="1">The di-lysine motif confers endoplasmic reticulum localization for type I membrane proteins.</text>
</comment>
<comment type="similarity">
    <text evidence="5">Belongs to the short-chain dehydrogenases/reductases (SDR) family. 17-beta-HSD 3 subfamily.</text>
</comment>
<sequence>MESALPAAGFLYWVGAGTVAYLALRISYSLFTALRVWGVGNEAGVGPGLGEWAVVTGGTDGIGKSYAEELAKRGMKVVLISRSQDKLDQVSSEIKEKFKVETRTIAVDFTLEDIYDKIKTGLAGLEIGILVNNVGMSYEYPEYFLDVPDLDNVIKKMININILSVCKMTQLVLPGMVERSKGAILNISSGSGMFPVPLLTIYSATKTFVDFFSQCLHEEYRSKGIFVQSVLPYFVATKLAKIRKPTLDKPTPETFVKSAIKTVGLQSRTNGYLIHVLMGWIISNLPSWIYLKIAMNMNKATRVHYLKKIKKN</sequence>
<keyword id="KW-0256">Endoplasmic reticulum</keyword>
<keyword id="KW-0444">Lipid biosynthesis</keyword>
<keyword id="KW-0443">Lipid metabolism</keyword>
<keyword id="KW-0472">Membrane</keyword>
<keyword id="KW-0521">NADP</keyword>
<keyword id="KW-0560">Oxidoreductase</keyword>
<keyword id="KW-1185">Reference proteome</keyword>
<keyword id="KW-0752">Steroid biosynthesis</keyword>
<keyword id="KW-0812">Transmembrane</keyword>
<keyword id="KW-1133">Transmembrane helix</keyword>
<evidence type="ECO:0000250" key="1"/>
<evidence type="ECO:0000250" key="2">
    <source>
        <dbReference type="UniProtKB" id="Q53GQ0"/>
    </source>
</evidence>
<evidence type="ECO:0000255" key="3"/>
<evidence type="ECO:0000255" key="4">
    <source>
        <dbReference type="PROSITE-ProRule" id="PRU10001"/>
    </source>
</evidence>
<evidence type="ECO:0000305" key="5"/>
<proteinExistence type="evidence at transcript level"/>